<dbReference type="EMBL" id="AF130347">
    <property type="protein sequence ID" value="AAF43264.1"/>
    <property type="molecule type" value="Genomic_DNA"/>
</dbReference>
<dbReference type="EMBL" id="LT708304">
    <property type="protein sequence ID" value="SIU00547.1"/>
    <property type="molecule type" value="Genomic_DNA"/>
</dbReference>
<dbReference type="RefSeq" id="WP_003899076.1">
    <property type="nucleotide sequence ID" value="NC_002945.4"/>
</dbReference>
<dbReference type="SMR" id="P0A583"/>
<dbReference type="KEGG" id="mbo:BQ2027_MB1944C"/>
<dbReference type="Proteomes" id="UP000001419">
    <property type="component" value="Chromosome"/>
</dbReference>
<dbReference type="GO" id="GO:0005737">
    <property type="term" value="C:cytoplasm"/>
    <property type="evidence" value="ECO:0007669"/>
    <property type="project" value="UniProtKB-SubCell"/>
</dbReference>
<dbReference type="GO" id="GO:0003700">
    <property type="term" value="F:DNA-binding transcription factor activity"/>
    <property type="evidence" value="ECO:0007669"/>
    <property type="project" value="InterPro"/>
</dbReference>
<dbReference type="GO" id="GO:0000976">
    <property type="term" value="F:transcription cis-regulatory region binding"/>
    <property type="evidence" value="ECO:0007669"/>
    <property type="project" value="TreeGrafter"/>
</dbReference>
<dbReference type="GO" id="GO:0008270">
    <property type="term" value="F:zinc ion binding"/>
    <property type="evidence" value="ECO:0007669"/>
    <property type="project" value="TreeGrafter"/>
</dbReference>
<dbReference type="GO" id="GO:0045892">
    <property type="term" value="P:negative regulation of DNA-templated transcription"/>
    <property type="evidence" value="ECO:0007669"/>
    <property type="project" value="TreeGrafter"/>
</dbReference>
<dbReference type="GO" id="GO:1900376">
    <property type="term" value="P:regulation of secondary metabolite biosynthetic process"/>
    <property type="evidence" value="ECO:0007669"/>
    <property type="project" value="TreeGrafter"/>
</dbReference>
<dbReference type="CDD" id="cd07153">
    <property type="entry name" value="Fur_like"/>
    <property type="match status" value="1"/>
</dbReference>
<dbReference type="FunFam" id="3.30.1490.190:FF:000011">
    <property type="entry name" value="Fur family transcriptional regulator"/>
    <property type="match status" value="1"/>
</dbReference>
<dbReference type="FunFam" id="1.10.10.10:FF:000729">
    <property type="entry name" value="Transcriptional regulator FurA"/>
    <property type="match status" value="1"/>
</dbReference>
<dbReference type="Gene3D" id="3.30.1490.190">
    <property type="match status" value="1"/>
</dbReference>
<dbReference type="Gene3D" id="1.10.10.10">
    <property type="entry name" value="Winged helix-like DNA-binding domain superfamily/Winged helix DNA-binding domain"/>
    <property type="match status" value="1"/>
</dbReference>
<dbReference type="InterPro" id="IPR002481">
    <property type="entry name" value="FUR"/>
</dbReference>
<dbReference type="InterPro" id="IPR043135">
    <property type="entry name" value="Fur_C"/>
</dbReference>
<dbReference type="InterPro" id="IPR036388">
    <property type="entry name" value="WH-like_DNA-bd_sf"/>
</dbReference>
<dbReference type="InterPro" id="IPR036390">
    <property type="entry name" value="WH_DNA-bd_sf"/>
</dbReference>
<dbReference type="PANTHER" id="PTHR33202:SF18">
    <property type="entry name" value="TRANSCRIPTIONAL REGULATOR FURA"/>
    <property type="match status" value="1"/>
</dbReference>
<dbReference type="PANTHER" id="PTHR33202">
    <property type="entry name" value="ZINC UPTAKE REGULATION PROTEIN"/>
    <property type="match status" value="1"/>
</dbReference>
<dbReference type="Pfam" id="PF01475">
    <property type="entry name" value="FUR"/>
    <property type="match status" value="1"/>
</dbReference>
<dbReference type="SUPFAM" id="SSF46785">
    <property type="entry name" value="Winged helix' DNA-binding domain"/>
    <property type="match status" value="1"/>
</dbReference>
<keyword id="KW-0963">Cytoplasm</keyword>
<keyword id="KW-0238">DNA-binding</keyword>
<keyword id="KW-0408">Iron</keyword>
<keyword id="KW-0479">Metal-binding</keyword>
<keyword id="KW-1185">Reference proteome</keyword>
<keyword id="KW-0678">Repressor</keyword>
<keyword id="KW-0804">Transcription</keyword>
<keyword id="KW-0805">Transcription regulation</keyword>
<keyword id="KW-0862">Zinc</keyword>
<organism>
    <name type="scientific">Mycobacterium bovis (strain ATCC BAA-935 / AF2122/97)</name>
    <dbReference type="NCBI Taxonomy" id="233413"/>
    <lineage>
        <taxon>Bacteria</taxon>
        <taxon>Bacillati</taxon>
        <taxon>Actinomycetota</taxon>
        <taxon>Actinomycetes</taxon>
        <taxon>Mycobacteriales</taxon>
        <taxon>Mycobacteriaceae</taxon>
        <taxon>Mycobacterium</taxon>
        <taxon>Mycobacterium tuberculosis complex</taxon>
    </lineage>
</organism>
<comment type="function">
    <text evidence="1">Represses transcription of the catalase-peroxidase gene katG and its own transcription by binding to the promoter region in a redox-dependent manner.</text>
</comment>
<comment type="subunit">
    <text evidence="1">Homodimer.</text>
</comment>
<comment type="subcellular location">
    <subcellularLocation>
        <location evidence="1">Cytoplasm</location>
    </subcellularLocation>
</comment>
<comment type="similarity">
    <text evidence="2">Belongs to the Fur family.</text>
</comment>
<reference key="1">
    <citation type="submission" date="1999-02" db="EMBL/GenBank/DDBJ databases">
        <authorList>
            <person name="Song J."/>
            <person name="Deretic V."/>
        </authorList>
    </citation>
    <scope>NUCLEOTIDE SEQUENCE [GENOMIC DNA]</scope>
    <source>
        <strain>ATCC 19210 / NCTC 10772 / TMC 410</strain>
    </source>
</reference>
<reference key="2">
    <citation type="journal article" date="2003" name="Proc. Natl. Acad. Sci. U.S.A.">
        <title>The complete genome sequence of Mycobacterium bovis.</title>
        <authorList>
            <person name="Garnier T."/>
            <person name="Eiglmeier K."/>
            <person name="Camus J.-C."/>
            <person name="Medina N."/>
            <person name="Mansoor H."/>
            <person name="Pryor M."/>
            <person name="Duthoy S."/>
            <person name="Grondin S."/>
            <person name="Lacroix C."/>
            <person name="Monsempe C."/>
            <person name="Simon S."/>
            <person name="Harris B."/>
            <person name="Atkin R."/>
            <person name="Doggett J."/>
            <person name="Mayes R."/>
            <person name="Keating L."/>
            <person name="Wheeler P.R."/>
            <person name="Parkhill J."/>
            <person name="Barrell B.G."/>
            <person name="Cole S.T."/>
            <person name="Gordon S.V."/>
            <person name="Hewinson R.G."/>
        </authorList>
    </citation>
    <scope>NUCLEOTIDE SEQUENCE [LARGE SCALE GENOMIC DNA]</scope>
    <source>
        <strain>ATCC BAA-935 / AF2122/97</strain>
    </source>
</reference>
<reference key="3">
    <citation type="journal article" date="2017" name="Genome Announc.">
        <title>Updated reference genome sequence and annotation of Mycobacterium bovis AF2122/97.</title>
        <authorList>
            <person name="Malone K.M."/>
            <person name="Farrell D."/>
            <person name="Stuber T.P."/>
            <person name="Schubert O.T."/>
            <person name="Aebersold R."/>
            <person name="Robbe-Austerman S."/>
            <person name="Gordon S.V."/>
        </authorList>
    </citation>
    <scope>NUCLEOTIDE SEQUENCE [LARGE SCALE GENOMIC DNA]</scope>
    <scope>GENOME REANNOTATION</scope>
    <source>
        <strain>ATCC BAA-935 / AF2122/97</strain>
    </source>
</reference>
<name>FURA_MYCBO</name>
<accession>P0A583</accession>
<accession>A0A1R3Y040</accession>
<accession>O07715</accession>
<accession>O07724</accession>
<accession>X2BIW7</accession>
<gene>
    <name type="primary">furA</name>
    <name type="synonym">fur</name>
    <name type="ordered locus">BQ2027_MB1944C</name>
</gene>
<evidence type="ECO:0000250" key="1"/>
<evidence type="ECO:0000305" key="2"/>
<feature type="chain" id="PRO_0000095559" description="Transcriptional regulator FurA">
    <location>
        <begin position="1"/>
        <end position="147"/>
    </location>
</feature>
<feature type="region of interest" description="DNA-binding" evidence="1">
    <location>
        <begin position="1"/>
        <end position="85"/>
    </location>
</feature>
<feature type="region of interest" description="Dimerization" evidence="1">
    <location>
        <begin position="86"/>
        <end position="147"/>
    </location>
</feature>
<feature type="binding site" evidence="1">
    <location>
        <position position="34"/>
    </location>
    <ligand>
        <name>Zn(2+)</name>
        <dbReference type="ChEBI" id="CHEBI:29105"/>
    </ligand>
</feature>
<feature type="binding site" evidence="1">
    <location>
        <position position="82"/>
    </location>
    <ligand>
        <name>Zn(2+)</name>
        <dbReference type="ChEBI" id="CHEBI:29105"/>
    </ligand>
</feature>
<feature type="binding site" evidence="1">
    <location>
        <position position="87"/>
    </location>
    <ligand>
        <name>Fe cation</name>
        <dbReference type="ChEBI" id="CHEBI:24875"/>
    </ligand>
</feature>
<feature type="binding site" evidence="1">
    <location>
        <position position="89"/>
    </location>
    <ligand>
        <name>Fe cation</name>
        <dbReference type="ChEBI" id="CHEBI:24875"/>
    </ligand>
</feature>
<feature type="binding site" evidence="1">
    <location>
        <position position="91"/>
    </location>
    <ligand>
        <name>Zn(2+)</name>
        <dbReference type="ChEBI" id="CHEBI:29105"/>
    </ligand>
</feature>
<feature type="binding site" evidence="1">
    <location>
        <position position="94"/>
    </location>
    <ligand>
        <name>Zn(2+)</name>
        <dbReference type="ChEBI" id="CHEBI:29105"/>
    </ligand>
</feature>
<feature type="binding site" evidence="1">
    <location>
        <position position="97"/>
    </location>
    <ligand>
        <name>Zn(2+)</name>
        <dbReference type="ChEBI" id="CHEBI:29105"/>
    </ligand>
</feature>
<feature type="binding site" evidence="1">
    <location>
        <position position="102"/>
    </location>
    <ligand>
        <name>Zn(2+)</name>
        <dbReference type="ChEBI" id="CHEBI:29105"/>
    </ligand>
</feature>
<feature type="binding site" evidence="1">
    <location>
        <position position="109"/>
    </location>
    <ligand>
        <name>Fe cation</name>
        <dbReference type="ChEBI" id="CHEBI:24875"/>
    </ligand>
</feature>
<protein>
    <recommendedName>
        <fullName>Transcriptional regulator FurA</fullName>
    </recommendedName>
</protein>
<sequence length="147" mass="15892">MSSIPDYAEQLRTADLRVTRPRVAVLEAVNAHPHADTETIFGAVRFALPDVSRQAVYDVLHALTAAGLVRKIQPSGSVARYESRVGDNHHHIVCRSCGVIADVDCAVGEAPCLTASDHNGFLLDEAEVIYWGLCPDCSISDTSRSHP</sequence>
<proteinExistence type="inferred from homology"/>